<feature type="chain" id="PRO_0000354669" description="Presenilin-2 NTF subunit" evidence="1">
    <location>
        <begin position="1"/>
        <end position="297"/>
    </location>
</feature>
<feature type="chain" id="PRO_0000354670" description="Presenilin-2 CTF subunit" evidence="1">
    <location>
        <begin position="298"/>
        <end position="448"/>
    </location>
</feature>
<feature type="topological domain" description="Cytoplasmic" evidence="4">
    <location>
        <begin position="1"/>
        <end position="87"/>
    </location>
</feature>
<feature type="transmembrane region" description="Helical" evidence="4">
    <location>
        <begin position="88"/>
        <end position="108"/>
    </location>
</feature>
<feature type="topological domain" description="Lumenal" evidence="4">
    <location>
        <begin position="109"/>
        <end position="138"/>
    </location>
</feature>
<feature type="transmembrane region" description="Helical" evidence="4">
    <location>
        <begin position="139"/>
        <end position="159"/>
    </location>
</feature>
<feature type="topological domain" description="Cytoplasmic" evidence="4">
    <location>
        <begin position="160"/>
        <end position="166"/>
    </location>
</feature>
<feature type="transmembrane region" description="Helical" evidence="4">
    <location>
        <begin position="167"/>
        <end position="187"/>
    </location>
</feature>
<feature type="topological domain" description="Lumenal" evidence="4">
    <location>
        <begin position="188"/>
        <end position="200"/>
    </location>
</feature>
<feature type="transmembrane region" description="Helical" evidence="4">
    <location>
        <begin position="201"/>
        <end position="221"/>
    </location>
</feature>
<feature type="topological domain" description="Cytoplasmic" evidence="4">
    <location>
        <begin position="222"/>
        <end position="223"/>
    </location>
</feature>
<feature type="transmembrane region" description="Helical" evidence="4">
    <location>
        <begin position="224"/>
        <end position="244"/>
    </location>
</feature>
<feature type="topological domain" description="Lumenal" evidence="4">
    <location>
        <begin position="245"/>
        <end position="249"/>
    </location>
</feature>
<feature type="transmembrane region" description="Helical" evidence="4">
    <location>
        <begin position="250"/>
        <end position="270"/>
    </location>
</feature>
<feature type="topological domain" description="Cytoplasmic" evidence="4">
    <location>
        <begin position="271"/>
        <end position="361"/>
    </location>
</feature>
<feature type="transmembrane region" description="Helical" evidence="4">
    <location>
        <begin position="362"/>
        <end position="382"/>
    </location>
</feature>
<feature type="topological domain" description="Lumenal" evidence="4">
    <location>
        <begin position="383"/>
        <end position="388"/>
    </location>
</feature>
<feature type="transmembrane region" description="Helical" evidence="4">
    <location>
        <begin position="389"/>
        <end position="409"/>
    </location>
</feature>
<feature type="topological domain" description="Cytoplasmic" evidence="4">
    <location>
        <begin position="410"/>
        <end position="413"/>
    </location>
</feature>
<feature type="intramembrane region" description="Helical" evidence="4">
    <location>
        <begin position="414"/>
        <end position="434"/>
    </location>
</feature>
<feature type="topological domain" description="Cytoplasmic" evidence="4">
    <location>
        <begin position="435"/>
        <end position="448"/>
    </location>
</feature>
<feature type="region of interest" description="Disordered" evidence="5">
    <location>
        <begin position="1"/>
        <end position="70"/>
    </location>
</feature>
<feature type="short sequence motif" description="PAL">
    <location>
        <begin position="414"/>
        <end position="416"/>
    </location>
</feature>
<feature type="compositionally biased region" description="Polar residues" evidence="5">
    <location>
        <begin position="19"/>
        <end position="30"/>
    </location>
</feature>
<feature type="active site" evidence="1">
    <location>
        <position position="263"/>
    </location>
</feature>
<feature type="active site" evidence="1">
    <location>
        <position position="366"/>
    </location>
</feature>
<feature type="modified residue" description="Phosphoserine" evidence="2">
    <location>
        <position position="22"/>
    </location>
</feature>
<feature type="modified residue" description="Phosphoserine" evidence="2">
    <location>
        <position position="25"/>
    </location>
</feature>
<feature type="modified residue" description="Phosphoserine" evidence="3">
    <location>
        <position position="30"/>
    </location>
</feature>
<feature type="modified residue" description="Phosphoserine" evidence="3">
    <location>
        <position position="52"/>
    </location>
</feature>
<evidence type="ECO:0000250" key="1"/>
<evidence type="ECO:0000250" key="2">
    <source>
        <dbReference type="UniProtKB" id="P49810"/>
    </source>
</evidence>
<evidence type="ECO:0000250" key="3">
    <source>
        <dbReference type="UniProtKB" id="Q61144"/>
    </source>
</evidence>
<evidence type="ECO:0000255" key="4"/>
<evidence type="ECO:0000256" key="5">
    <source>
        <dbReference type="SAM" id="MobiDB-lite"/>
    </source>
</evidence>
<evidence type="ECO:0000269" key="6">
    <source>
    </source>
</evidence>
<evidence type="ECO:0000305" key="7"/>
<keyword id="KW-0256">Endoplasmic reticulum</keyword>
<keyword id="KW-0333">Golgi apparatus</keyword>
<keyword id="KW-0378">Hydrolase</keyword>
<keyword id="KW-0472">Membrane</keyword>
<keyword id="KW-0914">Notch signaling pathway</keyword>
<keyword id="KW-0597">Phosphoprotein</keyword>
<keyword id="KW-0645">Protease</keyword>
<keyword id="KW-1185">Reference proteome</keyword>
<keyword id="KW-0812">Transmembrane</keyword>
<keyword id="KW-1133">Transmembrane helix</keyword>
<dbReference type="EC" id="3.4.23.-"/>
<dbReference type="EMBL" id="DQ853415">
    <property type="protein sequence ID" value="ABI15722.1"/>
    <property type="molecule type" value="mRNA"/>
</dbReference>
<dbReference type="EMBL" id="EU287432">
    <property type="protein sequence ID" value="ABX84376.1"/>
    <property type="molecule type" value="mRNA"/>
</dbReference>
<dbReference type="RefSeq" id="NP_001072134.1">
    <property type="nucleotide sequence ID" value="NM_001078666.1"/>
</dbReference>
<dbReference type="RefSeq" id="XP_005668005.1">
    <property type="nucleotide sequence ID" value="XM_005667948.3"/>
</dbReference>
<dbReference type="RefSeq" id="XP_005668006.1">
    <property type="nucleotide sequence ID" value="XM_005667949.3"/>
</dbReference>
<dbReference type="RefSeq" id="XP_013835506.1">
    <property type="nucleotide sequence ID" value="XM_013980052.2"/>
</dbReference>
<dbReference type="RefSeq" id="XP_013835507.1">
    <property type="nucleotide sequence ID" value="XM_013980053.2"/>
</dbReference>
<dbReference type="RefSeq" id="XP_013835508.1">
    <property type="nucleotide sequence ID" value="XM_013980054.2"/>
</dbReference>
<dbReference type="RefSeq" id="XP_013835509.1">
    <property type="nucleotide sequence ID" value="XM_013980055.1"/>
</dbReference>
<dbReference type="RefSeq" id="XP_013835510.1">
    <property type="nucleotide sequence ID" value="XM_013980056.2"/>
</dbReference>
<dbReference type="SMR" id="Q0MS45"/>
<dbReference type="FunCoup" id="Q0MS45">
    <property type="interactions" value="219"/>
</dbReference>
<dbReference type="STRING" id="9823.ENSSSCP00000051215"/>
<dbReference type="MEROPS" id="A22.002"/>
<dbReference type="GlyGen" id="Q0MS45">
    <property type="glycosylation" value="1 site"/>
</dbReference>
<dbReference type="PaxDb" id="9823-ENSSSCP00000011578"/>
<dbReference type="Ensembl" id="ENSSSCT00070016557.1">
    <property type="protein sequence ID" value="ENSSSCP00070013711.1"/>
    <property type="gene ID" value="ENSSSCG00070008508.1"/>
</dbReference>
<dbReference type="Ensembl" id="ENSSSCT00070016560.1">
    <property type="protein sequence ID" value="ENSSSCP00070013714.1"/>
    <property type="gene ID" value="ENSSSCG00070008508.1"/>
</dbReference>
<dbReference type="Ensembl" id="ENSSSCT00110033718">
    <property type="protein sequence ID" value="ENSSSCP00110022835"/>
    <property type="gene ID" value="ENSSSCG00110017702"/>
</dbReference>
<dbReference type="Ensembl" id="ENSSSCT00115021601">
    <property type="protein sequence ID" value="ENSSSCP00115020450"/>
    <property type="gene ID" value="ENSSSCG00115012377"/>
</dbReference>
<dbReference type="GeneID" id="780410"/>
<dbReference type="KEGG" id="ssc:780410"/>
<dbReference type="CTD" id="5664"/>
<dbReference type="eggNOG" id="KOG2736">
    <property type="taxonomic scope" value="Eukaryota"/>
</dbReference>
<dbReference type="HOGENOM" id="CLU_022975_3_1_1"/>
<dbReference type="InParanoid" id="Q0MS45"/>
<dbReference type="OrthoDB" id="20287at2759"/>
<dbReference type="TreeFam" id="TF315040"/>
<dbReference type="Reactome" id="R-SSC-1251985">
    <property type="pathway name" value="Nuclear signaling by ERBB4"/>
</dbReference>
<dbReference type="Reactome" id="R-SSC-193692">
    <property type="pathway name" value="Regulated proteolysis of p75NTR"/>
</dbReference>
<dbReference type="Reactome" id="R-SSC-3928665">
    <property type="pathway name" value="EPH-ephrin mediated repulsion of cells"/>
</dbReference>
<dbReference type="Reactome" id="R-SSC-9839383">
    <property type="pathway name" value="TGFBR3 PTM regulation"/>
</dbReference>
<dbReference type="Proteomes" id="UP000008227">
    <property type="component" value="Unplaced"/>
</dbReference>
<dbReference type="Proteomes" id="UP000314985">
    <property type="component" value="Chromosome 10"/>
</dbReference>
<dbReference type="Proteomes" id="UP000694570">
    <property type="component" value="Unplaced"/>
</dbReference>
<dbReference type="Proteomes" id="UP000694571">
    <property type="component" value="Unplaced"/>
</dbReference>
<dbReference type="Proteomes" id="UP000694720">
    <property type="component" value="Unplaced"/>
</dbReference>
<dbReference type="Proteomes" id="UP000694722">
    <property type="component" value="Unplaced"/>
</dbReference>
<dbReference type="Proteomes" id="UP000694723">
    <property type="component" value="Unplaced"/>
</dbReference>
<dbReference type="Proteomes" id="UP000694724">
    <property type="component" value="Unplaced"/>
</dbReference>
<dbReference type="Proteomes" id="UP000694725">
    <property type="component" value="Unplaced"/>
</dbReference>
<dbReference type="Proteomes" id="UP000694726">
    <property type="component" value="Unplaced"/>
</dbReference>
<dbReference type="Proteomes" id="UP000694727">
    <property type="component" value="Unplaced"/>
</dbReference>
<dbReference type="Proteomes" id="UP000694728">
    <property type="component" value="Unplaced"/>
</dbReference>
<dbReference type="GO" id="GO:0005789">
    <property type="term" value="C:endoplasmic reticulum membrane"/>
    <property type="evidence" value="ECO:0007669"/>
    <property type="project" value="UniProtKB-SubCell"/>
</dbReference>
<dbReference type="GO" id="GO:0070765">
    <property type="term" value="C:gamma-secretase complex"/>
    <property type="evidence" value="ECO:0000318"/>
    <property type="project" value="GO_Central"/>
</dbReference>
<dbReference type="GO" id="GO:0000139">
    <property type="term" value="C:Golgi membrane"/>
    <property type="evidence" value="ECO:0007669"/>
    <property type="project" value="UniProtKB-SubCell"/>
</dbReference>
<dbReference type="GO" id="GO:0042500">
    <property type="term" value="F:aspartic endopeptidase activity, intramembrane cleaving"/>
    <property type="evidence" value="ECO:0000318"/>
    <property type="project" value="GO_Central"/>
</dbReference>
<dbReference type="GO" id="GO:0034205">
    <property type="term" value="P:amyloid-beta formation"/>
    <property type="evidence" value="ECO:0000318"/>
    <property type="project" value="GO_Central"/>
</dbReference>
<dbReference type="GO" id="GO:0055074">
    <property type="term" value="P:calcium ion homeostasis"/>
    <property type="evidence" value="ECO:0000318"/>
    <property type="project" value="GO_Central"/>
</dbReference>
<dbReference type="GO" id="GO:0035556">
    <property type="term" value="P:intracellular signal transduction"/>
    <property type="evidence" value="ECO:0007669"/>
    <property type="project" value="InterPro"/>
</dbReference>
<dbReference type="GO" id="GO:0006509">
    <property type="term" value="P:membrane protein ectodomain proteolysis"/>
    <property type="evidence" value="ECO:0000318"/>
    <property type="project" value="GO_Central"/>
</dbReference>
<dbReference type="GO" id="GO:1990456">
    <property type="term" value="P:mitochondrion-endoplasmic reticulum membrane tethering"/>
    <property type="evidence" value="ECO:0000250"/>
    <property type="project" value="UniProtKB"/>
</dbReference>
<dbReference type="GO" id="GO:0007219">
    <property type="term" value="P:Notch signaling pathway"/>
    <property type="evidence" value="ECO:0000318"/>
    <property type="project" value="GO_Central"/>
</dbReference>
<dbReference type="GO" id="GO:0016485">
    <property type="term" value="P:protein processing"/>
    <property type="evidence" value="ECO:0000318"/>
    <property type="project" value="GO_Central"/>
</dbReference>
<dbReference type="GO" id="GO:0110097">
    <property type="term" value="P:regulation of calcium import into the mitochondrion"/>
    <property type="evidence" value="ECO:0000250"/>
    <property type="project" value="UniProtKB"/>
</dbReference>
<dbReference type="FunFam" id="1.10.472.100:FF:000001">
    <property type="entry name" value="Presenilin"/>
    <property type="match status" value="1"/>
</dbReference>
<dbReference type="Gene3D" id="1.10.472.100">
    <property type="entry name" value="Presenilin"/>
    <property type="match status" value="1"/>
</dbReference>
<dbReference type="InterPro" id="IPR001493">
    <property type="entry name" value="Pept_A22A_PS2"/>
</dbReference>
<dbReference type="InterPro" id="IPR001108">
    <property type="entry name" value="Peptidase_A22A"/>
</dbReference>
<dbReference type="InterPro" id="IPR006639">
    <property type="entry name" value="Preselin/SPP"/>
</dbReference>
<dbReference type="InterPro" id="IPR042524">
    <property type="entry name" value="Presenilin_C"/>
</dbReference>
<dbReference type="PANTHER" id="PTHR10202">
    <property type="entry name" value="PRESENILIN"/>
    <property type="match status" value="1"/>
</dbReference>
<dbReference type="PANTHER" id="PTHR10202:SF24">
    <property type="entry name" value="PRESENILIN-2"/>
    <property type="match status" value="1"/>
</dbReference>
<dbReference type="Pfam" id="PF01080">
    <property type="entry name" value="Presenilin"/>
    <property type="match status" value="2"/>
</dbReference>
<dbReference type="PRINTS" id="PR01072">
    <property type="entry name" value="PRESENILIN"/>
</dbReference>
<dbReference type="PRINTS" id="PR01074">
    <property type="entry name" value="PRESENILIN2"/>
</dbReference>
<dbReference type="SMART" id="SM00730">
    <property type="entry name" value="PSN"/>
    <property type="match status" value="1"/>
</dbReference>
<name>PSN2_PIG</name>
<sequence>MLTFMASDSEEEVCDERTSLMSAESPTPRSCQEGRQGLEDGESAAQWRSQDSEEDHEEDPDRYVCSGVPGRPPGLEEELTLKYGAKHVIMLFVPVTLCMIVVVATIKSVRFYTEKNGQLIYTPFTEDTPSVGQRLLNSVLNTLIMISVIVVMTIFLVVLYKYRCYKFIHGWLITSSLMLLFLFTYIYLGEVLKTYNVAMDYPTLFLTVWNFGAVGMVCIHWKGPLVLQQAYLIMISALMALVFIKYLPEWSAWVILGAISVYDLVAVLCPKGPLRMLVETAQERNEPIFPALIYSSAMVWTVGMAKLDPSSQGALQLPYDPEMEEDSYDSFGEPSYPEVFEPPLPGYPGEELEEEEERGVKLGLGDFIFYSVLVGKAAATGSGDWNTTLACFVAILIGLCLTLLLLAVFKKALPALPISITFGLIFYFSTDNLVRPFMDTLASHQLYI</sequence>
<reference key="1">
    <citation type="journal article" date="2007" name="BMC Neurosci.">
        <title>Molecular characterization and temporal expression profiling of presenilins in the developing porcine brain.</title>
        <authorList>
            <person name="Madsen L.B."/>
            <person name="Thomsen B."/>
            <person name="Larsen K."/>
            <person name="Bendixen C."/>
            <person name="Holm I.E."/>
            <person name="Fredholm M."/>
            <person name="Joergensen A.L."/>
            <person name="Nielsen A.L."/>
        </authorList>
    </citation>
    <scope>NUCLEOTIDE SEQUENCE [MRNA]</scope>
    <scope>TISSUE SPECIFICITY</scope>
    <source>
        <tissue>Brain</tissue>
        <tissue>Liver</tissue>
        <tissue>Lymphocyte</tissue>
    </source>
</reference>
<reference key="2">
    <citation type="submission" date="2007-11" db="EMBL/GenBank/DDBJ databases">
        <authorList>
            <person name="Wang G."/>
        </authorList>
    </citation>
    <scope>NUCLEOTIDE SEQUENCE [MRNA]</scope>
</reference>
<comment type="function">
    <text evidence="2">Probable catalytic subunit of the gamma-secretase complex, an endoprotease complex that catalyzes the intramembrane cleavage of integral membrane proteins such as Notch receptors and APP (amyloid-beta precursor protein). Requires the other members of the gamma-secretase complex to have a protease activity. May play a role in intracellular signaling and gene expression or in linking chromatin to the nuclear membrane. May function in the cytoplasmic partitioning of proteins. The holoprotein functions as a calcium-leak channel that allows the passive movement of calcium from endoplasmic reticulum to cytosol and is involved in calcium homeostasis. Is a regulator of mitochondrion-endoplasmic reticulum membrane tethering and modulates calcium ions shuttling between ER and mitochondria.</text>
</comment>
<comment type="subunit">
    <text evidence="1">Homodimer. Component of the gamma-secretase complex, a complex composed of a presenilin homodimer (PSEN1 or PSEN2), nicastrin (NCSTN), APH1 (APH1A or APH1B) and PEN2. Such minimal complex is sufficient for secretase activity, although other components may exist. Interacts with DOCK3. Interacts with HERPUD1, FLNA, FLNB and PARL (By similarity).</text>
</comment>
<comment type="subcellular location">
    <subcellularLocation>
        <location evidence="1">Endoplasmic reticulum membrane</location>
        <topology evidence="1">Multi-pass membrane protein</topology>
    </subcellularLocation>
    <subcellularLocation>
        <location evidence="1">Golgi apparatus membrane</location>
        <topology evidence="1">Multi-pass membrane protein</topology>
    </subcellularLocation>
</comment>
<comment type="tissue specificity">
    <text evidence="6">Detected in the embryonic brain in frontal cortex (at protein level). Expressed in the developing brain: frontal cortex, cerebellum, hippocampus, basal ganglia and brain stem. Localized mainly in neuronal cells and astrocytes.</text>
</comment>
<comment type="domain">
    <text evidence="1">The PAL motif is required for normal active site conformation.</text>
</comment>
<comment type="PTM">
    <text evidence="1">Phosphorylated on serine residues.</text>
</comment>
<comment type="similarity">
    <text evidence="7">Belongs to the peptidase A22A family.</text>
</comment>
<protein>
    <recommendedName>
        <fullName>Presenilin-2</fullName>
        <shortName>PS-2</shortName>
        <ecNumber>3.4.23.-</ecNumber>
    </recommendedName>
    <component>
        <recommendedName>
            <fullName>Presenilin-2 NTF subunit</fullName>
        </recommendedName>
    </component>
    <component>
        <recommendedName>
            <fullName>Presenilin-2 CTF subunit</fullName>
        </recommendedName>
    </component>
</protein>
<accession>Q0MS45</accession>
<organism>
    <name type="scientific">Sus scrofa</name>
    <name type="common">Pig</name>
    <dbReference type="NCBI Taxonomy" id="9823"/>
    <lineage>
        <taxon>Eukaryota</taxon>
        <taxon>Metazoa</taxon>
        <taxon>Chordata</taxon>
        <taxon>Craniata</taxon>
        <taxon>Vertebrata</taxon>
        <taxon>Euteleostomi</taxon>
        <taxon>Mammalia</taxon>
        <taxon>Eutheria</taxon>
        <taxon>Laurasiatheria</taxon>
        <taxon>Artiodactyla</taxon>
        <taxon>Suina</taxon>
        <taxon>Suidae</taxon>
        <taxon>Sus</taxon>
    </lineage>
</organism>
<gene>
    <name type="primary">PSEN2</name>
</gene>
<proteinExistence type="evidence at protein level"/>